<dbReference type="EC" id="1.4.4.2" evidence="1"/>
<dbReference type="EMBL" id="CP000230">
    <property type="protein sequence ID" value="ABC23844.1"/>
    <property type="molecule type" value="Genomic_DNA"/>
</dbReference>
<dbReference type="RefSeq" id="WP_011390797.1">
    <property type="nucleotide sequence ID" value="NC_007643.1"/>
</dbReference>
<dbReference type="RefSeq" id="YP_428131.1">
    <property type="nucleotide sequence ID" value="NC_007643.1"/>
</dbReference>
<dbReference type="SMR" id="Q2RPV1"/>
<dbReference type="STRING" id="269796.Rru_A3049"/>
<dbReference type="EnsemblBacteria" id="ABC23844">
    <property type="protein sequence ID" value="ABC23844"/>
    <property type="gene ID" value="Rru_A3049"/>
</dbReference>
<dbReference type="KEGG" id="rru:Rru_A3049"/>
<dbReference type="PATRIC" id="fig|269796.9.peg.3159"/>
<dbReference type="eggNOG" id="COG0403">
    <property type="taxonomic scope" value="Bacteria"/>
</dbReference>
<dbReference type="HOGENOM" id="CLU_004620_0_2_5"/>
<dbReference type="PhylomeDB" id="Q2RPV1"/>
<dbReference type="Proteomes" id="UP000001929">
    <property type="component" value="Chromosome"/>
</dbReference>
<dbReference type="GO" id="GO:0004375">
    <property type="term" value="F:glycine dehydrogenase (decarboxylating) activity"/>
    <property type="evidence" value="ECO:0007669"/>
    <property type="project" value="UniProtKB-EC"/>
</dbReference>
<dbReference type="GO" id="GO:0019464">
    <property type="term" value="P:glycine decarboxylation via glycine cleavage system"/>
    <property type="evidence" value="ECO:0007669"/>
    <property type="project" value="UniProtKB-UniRule"/>
</dbReference>
<dbReference type="GO" id="GO:0009116">
    <property type="term" value="P:nucleoside metabolic process"/>
    <property type="evidence" value="ECO:0007669"/>
    <property type="project" value="InterPro"/>
</dbReference>
<dbReference type="Gene3D" id="3.90.1150.10">
    <property type="entry name" value="Aspartate Aminotransferase, domain 1"/>
    <property type="match status" value="1"/>
</dbReference>
<dbReference type="Gene3D" id="3.40.640.10">
    <property type="entry name" value="Type I PLP-dependent aspartate aminotransferase-like (Major domain)"/>
    <property type="match status" value="1"/>
</dbReference>
<dbReference type="HAMAP" id="MF_00712">
    <property type="entry name" value="GcvPA"/>
    <property type="match status" value="1"/>
</dbReference>
<dbReference type="InterPro" id="IPR023010">
    <property type="entry name" value="GcvPA"/>
</dbReference>
<dbReference type="InterPro" id="IPR049315">
    <property type="entry name" value="GDC-P_N"/>
</dbReference>
<dbReference type="InterPro" id="IPR015424">
    <property type="entry name" value="PyrdxlP-dep_Trfase"/>
</dbReference>
<dbReference type="InterPro" id="IPR015421">
    <property type="entry name" value="PyrdxlP-dep_Trfase_major"/>
</dbReference>
<dbReference type="InterPro" id="IPR015422">
    <property type="entry name" value="PyrdxlP-dep_Trfase_small"/>
</dbReference>
<dbReference type="NCBIfam" id="NF001696">
    <property type="entry name" value="PRK00451.1"/>
    <property type="match status" value="1"/>
</dbReference>
<dbReference type="PANTHER" id="PTHR42806">
    <property type="entry name" value="GLYCINE CLEAVAGE SYSTEM P-PROTEIN"/>
    <property type="match status" value="1"/>
</dbReference>
<dbReference type="PANTHER" id="PTHR42806:SF1">
    <property type="entry name" value="GLYCINE DEHYDROGENASE (DECARBOXYLATING)"/>
    <property type="match status" value="1"/>
</dbReference>
<dbReference type="Pfam" id="PF02347">
    <property type="entry name" value="GDC-P"/>
    <property type="match status" value="1"/>
</dbReference>
<dbReference type="PIRSF" id="PIRSF006815">
    <property type="entry name" value="GcvPA"/>
    <property type="match status" value="1"/>
</dbReference>
<dbReference type="SUPFAM" id="SSF53383">
    <property type="entry name" value="PLP-dependent transferases"/>
    <property type="match status" value="1"/>
</dbReference>
<feature type="chain" id="PRO_1000045675" description="Probable glycine dehydrogenase (decarboxylating) subunit 1">
    <location>
        <begin position="1"/>
        <end position="448"/>
    </location>
</feature>
<evidence type="ECO:0000255" key="1">
    <source>
        <dbReference type="HAMAP-Rule" id="MF_00712"/>
    </source>
</evidence>
<reference key="1">
    <citation type="journal article" date="2011" name="Stand. Genomic Sci.">
        <title>Complete genome sequence of Rhodospirillum rubrum type strain (S1).</title>
        <authorList>
            <person name="Munk A.C."/>
            <person name="Copeland A."/>
            <person name="Lucas S."/>
            <person name="Lapidus A."/>
            <person name="Del Rio T.G."/>
            <person name="Barry K."/>
            <person name="Detter J.C."/>
            <person name="Hammon N."/>
            <person name="Israni S."/>
            <person name="Pitluck S."/>
            <person name="Brettin T."/>
            <person name="Bruce D."/>
            <person name="Han C."/>
            <person name="Tapia R."/>
            <person name="Gilna P."/>
            <person name="Schmutz J."/>
            <person name="Larimer F."/>
            <person name="Land M."/>
            <person name="Kyrpides N.C."/>
            <person name="Mavromatis K."/>
            <person name="Richardson P."/>
            <person name="Rohde M."/>
            <person name="Goeker M."/>
            <person name="Klenk H.P."/>
            <person name="Zhang Y."/>
            <person name="Roberts G.P."/>
            <person name="Reslewic S."/>
            <person name="Schwartz D.C."/>
        </authorList>
    </citation>
    <scope>NUCLEOTIDE SEQUENCE [LARGE SCALE GENOMIC DNA]</scope>
    <source>
        <strain>ATCC 11170 / ATH 1.1.1 / DSM 467 / LMG 4362 / NCIMB 8255 / S1</strain>
    </source>
</reference>
<protein>
    <recommendedName>
        <fullName evidence="1">Probable glycine dehydrogenase (decarboxylating) subunit 1</fullName>
        <ecNumber evidence="1">1.4.4.2</ecNumber>
    </recommendedName>
    <alternativeName>
        <fullName evidence="1">Glycine cleavage system P-protein subunit 1</fullName>
    </alternativeName>
    <alternativeName>
        <fullName evidence="1">Glycine decarboxylase subunit 1</fullName>
    </alternativeName>
    <alternativeName>
        <fullName evidence="1">Glycine dehydrogenase (aminomethyl-transferring) subunit 1</fullName>
    </alternativeName>
</protein>
<accession>Q2RPV1</accession>
<proteinExistence type="inferred from homology"/>
<comment type="function">
    <text evidence="1">The glycine cleavage system catalyzes the degradation of glycine. The P protein binds the alpha-amino group of glycine through its pyridoxal phosphate cofactor; CO(2) is released and the remaining methylamine moiety is then transferred to the lipoamide cofactor of the H protein.</text>
</comment>
<comment type="catalytic activity">
    <reaction evidence="1">
        <text>N(6)-[(R)-lipoyl]-L-lysyl-[glycine-cleavage complex H protein] + glycine + H(+) = N(6)-[(R)-S(8)-aminomethyldihydrolipoyl]-L-lysyl-[glycine-cleavage complex H protein] + CO2</text>
        <dbReference type="Rhea" id="RHEA:24304"/>
        <dbReference type="Rhea" id="RHEA-COMP:10494"/>
        <dbReference type="Rhea" id="RHEA-COMP:10495"/>
        <dbReference type="ChEBI" id="CHEBI:15378"/>
        <dbReference type="ChEBI" id="CHEBI:16526"/>
        <dbReference type="ChEBI" id="CHEBI:57305"/>
        <dbReference type="ChEBI" id="CHEBI:83099"/>
        <dbReference type="ChEBI" id="CHEBI:83143"/>
        <dbReference type="EC" id="1.4.4.2"/>
    </reaction>
</comment>
<comment type="subunit">
    <text evidence="1">The glycine cleavage system is composed of four proteins: P, T, L and H. In this organism, the P 'protein' is a heterodimer of two subunits.</text>
</comment>
<comment type="similarity">
    <text evidence="1">Belongs to the GcvP family. N-terminal subunit subfamily.</text>
</comment>
<gene>
    <name evidence="1" type="primary">gcvPA</name>
    <name type="ordered locus">Rru_A3049</name>
</gene>
<name>GCSPA_RHORT</name>
<sequence length="448" mass="47384">MRYLPHSEADRAAMLATIGAASVEDLFRDVPREALDQAAFDALPDHGGEMEVERALSALAARNLTAGSVPCFLGAGSYRHHVPAAVDALIQRGEFLTSYTPYQAEVSQGTLQYLFEFQTQVALITGMEVANASMYDGATACAEAAAMAVRITRRRKVLMAGGLHPHYTATTQTLLACLGHEGEGLPPDPLALGDLIGRVGSDTACVIVQNPDFFGRLRDLSPLAEACHAAGALLVVAVCEPVSLGLVAPPGAMGADIVVAEGHALGSPTGFGGPGVGLFATREKYLRQMPGRLAGETLDESGKRGYVLTLSTREQHIRREKATSNICTNSGLIALAFTIHMTLLGEAGFTRLAWINHANAVALAEKLARVKGVKVLPETFFNEFTLRLPKPAAEVVEALAARSILAGVPVSRFLPTYPELANLLLVNATELTTPEDADALVAALKEVL</sequence>
<organism>
    <name type="scientific">Rhodospirillum rubrum (strain ATCC 11170 / ATH 1.1.1 / DSM 467 / LMG 4362 / NCIMB 8255 / S1)</name>
    <dbReference type="NCBI Taxonomy" id="269796"/>
    <lineage>
        <taxon>Bacteria</taxon>
        <taxon>Pseudomonadati</taxon>
        <taxon>Pseudomonadota</taxon>
        <taxon>Alphaproteobacteria</taxon>
        <taxon>Rhodospirillales</taxon>
        <taxon>Rhodospirillaceae</taxon>
        <taxon>Rhodospirillum</taxon>
    </lineage>
</organism>
<keyword id="KW-0560">Oxidoreductase</keyword>
<keyword id="KW-1185">Reference proteome</keyword>